<protein>
    <recommendedName>
        <fullName>Peptide chain release factor 1</fullName>
        <shortName>RF-1</shortName>
    </recommendedName>
</protein>
<reference key="1">
    <citation type="journal article" date="2007" name="J. Bacteriol.">
        <title>Genome-wide transcriptional changes in Streptococcus gordonii in response to competence signaling peptide.</title>
        <authorList>
            <person name="Vickerman M.M."/>
            <person name="Iobst S."/>
            <person name="Jesionowski A.M."/>
            <person name="Gill S.R."/>
        </authorList>
    </citation>
    <scope>NUCLEOTIDE SEQUENCE [LARGE SCALE GENOMIC DNA]</scope>
    <source>
        <strain>Challis / ATCC 35105 / BCRC 15272 / CH1 / DL1 / V288</strain>
    </source>
</reference>
<reference key="2">
    <citation type="journal article" date="1996" name="FEMS Microbiol. Lett.">
        <title>Cloning and sequence analysis of thymidine kinase from the oral bacterium Streptococcus gordonii.</title>
        <authorList>
            <person name="McNab R."/>
        </authorList>
    </citation>
    <scope>NUCLEOTIDE SEQUENCE [GENOMIC DNA] OF 1-67</scope>
</reference>
<proteinExistence type="inferred from homology"/>
<accession>P47850</accession>
<accession>A8AXD1</accession>
<gene>
    <name type="primary">prfA</name>
    <name type="ordered locus">SGO_1154</name>
</gene>
<feature type="chain" id="PRO_0000177750" description="Peptide chain release factor 1">
    <location>
        <begin position="1"/>
        <end position="359"/>
    </location>
</feature>
<feature type="region of interest" description="Disordered" evidence="2">
    <location>
        <begin position="288"/>
        <end position="307"/>
    </location>
</feature>
<feature type="compositionally biased region" description="Basic and acidic residues" evidence="2">
    <location>
        <begin position="293"/>
        <end position="307"/>
    </location>
</feature>
<feature type="modified residue" description="N5-methylglutamine" evidence="1">
    <location>
        <position position="236"/>
    </location>
</feature>
<evidence type="ECO:0000250" key="1"/>
<evidence type="ECO:0000256" key="2">
    <source>
        <dbReference type="SAM" id="MobiDB-lite"/>
    </source>
</evidence>
<evidence type="ECO:0000305" key="3"/>
<comment type="function">
    <text evidence="1">Peptide chain release factor 1 directs the termination of translation in response to the peptide chain termination codons UAG and UAA.</text>
</comment>
<comment type="subcellular location">
    <subcellularLocation>
        <location evidence="1">Cytoplasm</location>
    </subcellularLocation>
</comment>
<comment type="PTM">
    <text evidence="1">Methylated by PrmC. Methylation increases the termination efficiency of RF1 (By similarity).</text>
</comment>
<comment type="similarity">
    <text evidence="3">Belongs to the prokaryotic/mitochondrial release factor family.</text>
</comment>
<dbReference type="EMBL" id="CP000725">
    <property type="protein sequence ID" value="ABV10075.1"/>
    <property type="molecule type" value="Genomic_DNA"/>
</dbReference>
<dbReference type="EMBL" id="L40415">
    <property type="protein sequence ID" value="AAB02290.1"/>
    <property type="molecule type" value="Genomic_DNA"/>
</dbReference>
<dbReference type="RefSeq" id="WP_012000560.1">
    <property type="nucleotide sequence ID" value="NC_009785.1"/>
</dbReference>
<dbReference type="SMR" id="P47850"/>
<dbReference type="STRING" id="467705.SGO_1154"/>
<dbReference type="KEGG" id="sgo:SGO_1154"/>
<dbReference type="eggNOG" id="COG0216">
    <property type="taxonomic scope" value="Bacteria"/>
</dbReference>
<dbReference type="HOGENOM" id="CLU_036856_0_1_9"/>
<dbReference type="Proteomes" id="UP000001131">
    <property type="component" value="Chromosome"/>
</dbReference>
<dbReference type="GO" id="GO:0005737">
    <property type="term" value="C:cytoplasm"/>
    <property type="evidence" value="ECO:0007669"/>
    <property type="project" value="UniProtKB-SubCell"/>
</dbReference>
<dbReference type="GO" id="GO:0016149">
    <property type="term" value="F:translation release factor activity, codon specific"/>
    <property type="evidence" value="ECO:0007669"/>
    <property type="project" value="UniProtKB-UniRule"/>
</dbReference>
<dbReference type="FunFam" id="3.30.160.20:FF:000027">
    <property type="entry name" value="Peptide chain release factor 1"/>
    <property type="match status" value="1"/>
</dbReference>
<dbReference type="FunFam" id="3.30.70.1660:FF:000002">
    <property type="entry name" value="Peptide chain release factor 1"/>
    <property type="match status" value="1"/>
</dbReference>
<dbReference type="FunFam" id="3.30.70.1660:FF:000004">
    <property type="entry name" value="Peptide chain release factor 1"/>
    <property type="match status" value="1"/>
</dbReference>
<dbReference type="Gene3D" id="3.30.160.20">
    <property type="match status" value="1"/>
</dbReference>
<dbReference type="Gene3D" id="3.30.70.1660">
    <property type="match status" value="2"/>
</dbReference>
<dbReference type="Gene3D" id="6.10.140.1950">
    <property type="match status" value="1"/>
</dbReference>
<dbReference type="HAMAP" id="MF_00093">
    <property type="entry name" value="Rel_fac_1"/>
    <property type="match status" value="1"/>
</dbReference>
<dbReference type="InterPro" id="IPR005139">
    <property type="entry name" value="PCRF"/>
</dbReference>
<dbReference type="InterPro" id="IPR000352">
    <property type="entry name" value="Pep_chain_release_fac_I"/>
</dbReference>
<dbReference type="InterPro" id="IPR045853">
    <property type="entry name" value="Pep_chain_release_fac_I_sf"/>
</dbReference>
<dbReference type="InterPro" id="IPR050057">
    <property type="entry name" value="Prokaryotic/Mito_RF"/>
</dbReference>
<dbReference type="InterPro" id="IPR004373">
    <property type="entry name" value="RF-1"/>
</dbReference>
<dbReference type="NCBIfam" id="TIGR00019">
    <property type="entry name" value="prfA"/>
    <property type="match status" value="1"/>
</dbReference>
<dbReference type="NCBIfam" id="NF001859">
    <property type="entry name" value="PRK00591.1"/>
    <property type="match status" value="1"/>
</dbReference>
<dbReference type="PANTHER" id="PTHR43804">
    <property type="entry name" value="LD18447P"/>
    <property type="match status" value="1"/>
</dbReference>
<dbReference type="PANTHER" id="PTHR43804:SF7">
    <property type="entry name" value="LD18447P"/>
    <property type="match status" value="1"/>
</dbReference>
<dbReference type="Pfam" id="PF03462">
    <property type="entry name" value="PCRF"/>
    <property type="match status" value="1"/>
</dbReference>
<dbReference type="Pfam" id="PF00472">
    <property type="entry name" value="RF-1"/>
    <property type="match status" value="1"/>
</dbReference>
<dbReference type="SMART" id="SM00937">
    <property type="entry name" value="PCRF"/>
    <property type="match status" value="1"/>
</dbReference>
<dbReference type="SUPFAM" id="SSF75620">
    <property type="entry name" value="Release factor"/>
    <property type="match status" value="1"/>
</dbReference>
<dbReference type="PROSITE" id="PS00745">
    <property type="entry name" value="RF_PROK_I"/>
    <property type="match status" value="1"/>
</dbReference>
<organism>
    <name type="scientific">Streptococcus gordonii (strain Challis / ATCC 35105 / BCRC 15272 / CH1 / DL1 / V288)</name>
    <dbReference type="NCBI Taxonomy" id="467705"/>
    <lineage>
        <taxon>Bacteria</taxon>
        <taxon>Bacillati</taxon>
        <taxon>Bacillota</taxon>
        <taxon>Bacilli</taxon>
        <taxon>Lactobacillales</taxon>
        <taxon>Streptococcaceae</taxon>
        <taxon>Streptococcus</taxon>
    </lineage>
</organism>
<name>RF1_STRGC</name>
<sequence>MNIYEQLQAVEDRYEELGELLSDPDVVSDTKRFMELSKEEASTRDTVTAYREYKQVLQNIVDAEEMIKESGGDADLEEMAKQELKDAKAEKEEYEEKLKILLLPKDPNDDKNIILEIRGAAGGDEAQLFAGDLLQMYQKYAESQGWRFEVMEASYNGVGGIKEVVAMVSGQSVYSKLKYESGAHRVQRVPVTESQGRVHTSTATVLVMPEIEEVEYDIDPKDLRVDIYHASGAGGQNVNKVATAVRIVHLPTNIKVEMQEERTQQKNRDKAMKIIRARVADHFAQIAQDEQDAERKSTIGTGDRSERIRTYNFPQNRVTDHRIGLTLQKLDTILAGKLDEVVDALVLYDQTQKLEELNK</sequence>
<keyword id="KW-0963">Cytoplasm</keyword>
<keyword id="KW-0488">Methylation</keyword>
<keyword id="KW-0648">Protein biosynthesis</keyword>
<keyword id="KW-1185">Reference proteome</keyword>